<comment type="function">
    <text evidence="1">Specifically methylates the guanine in position 1835 (m2G1835) of 23S rRNA.</text>
</comment>
<comment type="catalytic activity">
    <reaction evidence="1">
        <text>guanosine(1835) in 23S rRNA + S-adenosyl-L-methionine = N(2)-methylguanosine(1835) in 23S rRNA + S-adenosyl-L-homocysteine + H(+)</text>
        <dbReference type="Rhea" id="RHEA:42744"/>
        <dbReference type="Rhea" id="RHEA-COMP:10217"/>
        <dbReference type="Rhea" id="RHEA-COMP:10218"/>
        <dbReference type="ChEBI" id="CHEBI:15378"/>
        <dbReference type="ChEBI" id="CHEBI:57856"/>
        <dbReference type="ChEBI" id="CHEBI:59789"/>
        <dbReference type="ChEBI" id="CHEBI:74269"/>
        <dbReference type="ChEBI" id="CHEBI:74481"/>
        <dbReference type="EC" id="2.1.1.174"/>
    </reaction>
</comment>
<comment type="subcellular location">
    <subcellularLocation>
        <location evidence="1">Cytoplasm</location>
    </subcellularLocation>
</comment>
<comment type="similarity">
    <text evidence="1">Belongs to the methyltransferase superfamily. RlmG family.</text>
</comment>
<keyword id="KW-0963">Cytoplasm</keyword>
<keyword id="KW-0489">Methyltransferase</keyword>
<keyword id="KW-1185">Reference proteome</keyword>
<keyword id="KW-0698">rRNA processing</keyword>
<keyword id="KW-0949">S-adenosyl-L-methionine</keyword>
<keyword id="KW-0808">Transferase</keyword>
<sequence length="383" mass="41876">MTSQFSTAGLTLELLRYPSQQVSNLQAWDAADEHIIKVLAEKVLEENAVPPQPCAIINDSFGALSCALTRMDSSWPLTVISDAKTSQLGALENLTRNQLDAEGIKWLTSRAPLPQDLSLVLMKLPKNLAYFAQQLRGLSQVLPQGTQVLIGAKAKSINSALITLLAEHLGPASASLAWKNTRVITCVSDGRARSLPKAITWSVPEYQLEISNLSNVFAANKLDIGARIMLENMPNGEFNTVVDLGCGNGILGLRAAGLYPKAKIHFIDDSEMAVASSQANWALNTLAPERAEFHWDDCMSHLDETVQPDLVLCNPPFHQGEAITDHIAWQMFNDAKHRLRSGGILHIVGNRHLNYHVKLKRLFGNCTTVASNGKFVILQSVKG</sequence>
<name>RLMG_SHEDO</name>
<organism>
    <name type="scientific">Shewanella denitrificans (strain OS217 / ATCC BAA-1090 / DSM 15013)</name>
    <dbReference type="NCBI Taxonomy" id="318161"/>
    <lineage>
        <taxon>Bacteria</taxon>
        <taxon>Pseudomonadati</taxon>
        <taxon>Pseudomonadota</taxon>
        <taxon>Gammaproteobacteria</taxon>
        <taxon>Alteromonadales</taxon>
        <taxon>Shewanellaceae</taxon>
        <taxon>Shewanella</taxon>
    </lineage>
</organism>
<gene>
    <name evidence="1" type="primary">rlmG</name>
    <name type="ordered locus">Sden_2937</name>
</gene>
<protein>
    <recommendedName>
        <fullName evidence="1">Ribosomal RNA large subunit methyltransferase G</fullName>
        <ecNumber evidence="1">2.1.1.174</ecNumber>
    </recommendedName>
    <alternativeName>
        <fullName evidence="1">23S rRNA m2G1835 methyltransferase</fullName>
    </alternativeName>
    <alternativeName>
        <fullName evidence="1">rRNA (guanine-N(2)-)-methyltransferase RlmG</fullName>
    </alternativeName>
</protein>
<dbReference type="EC" id="2.1.1.174" evidence="1"/>
<dbReference type="EMBL" id="CP000302">
    <property type="protein sequence ID" value="ABE56215.1"/>
    <property type="molecule type" value="Genomic_DNA"/>
</dbReference>
<dbReference type="RefSeq" id="WP_011497364.1">
    <property type="nucleotide sequence ID" value="NC_007954.1"/>
</dbReference>
<dbReference type="SMR" id="Q12K11"/>
<dbReference type="STRING" id="318161.Sden_2937"/>
<dbReference type="KEGG" id="sdn:Sden_2937"/>
<dbReference type="eggNOG" id="COG2813">
    <property type="taxonomic scope" value="Bacteria"/>
</dbReference>
<dbReference type="HOGENOM" id="CLU_040288_4_0_6"/>
<dbReference type="OrthoDB" id="29650at2"/>
<dbReference type="Proteomes" id="UP000001982">
    <property type="component" value="Chromosome"/>
</dbReference>
<dbReference type="GO" id="GO:0005737">
    <property type="term" value="C:cytoplasm"/>
    <property type="evidence" value="ECO:0007669"/>
    <property type="project" value="UniProtKB-SubCell"/>
</dbReference>
<dbReference type="GO" id="GO:0052916">
    <property type="term" value="F:23S rRNA (guanine(1835)-N(2))-methyltransferase activity"/>
    <property type="evidence" value="ECO:0007669"/>
    <property type="project" value="UniProtKB-EC"/>
</dbReference>
<dbReference type="GO" id="GO:0003676">
    <property type="term" value="F:nucleic acid binding"/>
    <property type="evidence" value="ECO:0007669"/>
    <property type="project" value="InterPro"/>
</dbReference>
<dbReference type="CDD" id="cd02440">
    <property type="entry name" value="AdoMet_MTases"/>
    <property type="match status" value="1"/>
</dbReference>
<dbReference type="Gene3D" id="3.40.50.150">
    <property type="entry name" value="Vaccinia Virus protein VP39"/>
    <property type="match status" value="2"/>
</dbReference>
<dbReference type="HAMAP" id="MF_01859">
    <property type="entry name" value="23SrRNA_methyltr_G"/>
    <property type="match status" value="1"/>
</dbReference>
<dbReference type="InterPro" id="IPR002052">
    <property type="entry name" value="DNA_methylase_N6_adenine_CS"/>
</dbReference>
<dbReference type="InterPro" id="IPR017237">
    <property type="entry name" value="rRNA_m2G-MeTrfase_RlmG"/>
</dbReference>
<dbReference type="InterPro" id="IPR046977">
    <property type="entry name" value="RsmC/RlmG"/>
</dbReference>
<dbReference type="InterPro" id="IPR029063">
    <property type="entry name" value="SAM-dependent_MTases_sf"/>
</dbReference>
<dbReference type="InterPro" id="IPR007848">
    <property type="entry name" value="Small_mtfrase_dom"/>
</dbReference>
<dbReference type="PANTHER" id="PTHR47816:SF5">
    <property type="entry name" value="RIBOSOMAL RNA LARGE SUBUNIT METHYLTRANSFERASE G"/>
    <property type="match status" value="1"/>
</dbReference>
<dbReference type="PANTHER" id="PTHR47816">
    <property type="entry name" value="RIBOSOMAL RNA SMALL SUBUNIT METHYLTRANSFERASE C"/>
    <property type="match status" value="1"/>
</dbReference>
<dbReference type="Pfam" id="PF05175">
    <property type="entry name" value="MTS"/>
    <property type="match status" value="1"/>
</dbReference>
<dbReference type="PIRSF" id="PIRSF037565">
    <property type="entry name" value="RRNA_m2G_Mtase_RsmD_prd"/>
    <property type="match status" value="1"/>
</dbReference>
<dbReference type="SUPFAM" id="SSF53335">
    <property type="entry name" value="S-adenosyl-L-methionine-dependent methyltransferases"/>
    <property type="match status" value="1"/>
</dbReference>
<reference key="1">
    <citation type="submission" date="2006-03" db="EMBL/GenBank/DDBJ databases">
        <title>Complete sequence of Shewanella denitrificans OS217.</title>
        <authorList>
            <consortium name="US DOE Joint Genome Institute"/>
            <person name="Copeland A."/>
            <person name="Lucas S."/>
            <person name="Lapidus A."/>
            <person name="Barry K."/>
            <person name="Detter J.C."/>
            <person name="Glavina del Rio T."/>
            <person name="Hammon N."/>
            <person name="Israni S."/>
            <person name="Dalin E."/>
            <person name="Tice H."/>
            <person name="Pitluck S."/>
            <person name="Brettin T."/>
            <person name="Bruce D."/>
            <person name="Han C."/>
            <person name="Tapia R."/>
            <person name="Gilna P."/>
            <person name="Kiss H."/>
            <person name="Schmutz J."/>
            <person name="Larimer F."/>
            <person name="Land M."/>
            <person name="Hauser L."/>
            <person name="Kyrpides N."/>
            <person name="Lykidis A."/>
            <person name="Richardson P."/>
        </authorList>
    </citation>
    <scope>NUCLEOTIDE SEQUENCE [LARGE SCALE GENOMIC DNA]</scope>
    <source>
        <strain>OS217 / ATCC BAA-1090 / DSM 15013</strain>
    </source>
</reference>
<proteinExistence type="inferred from homology"/>
<evidence type="ECO:0000255" key="1">
    <source>
        <dbReference type="HAMAP-Rule" id="MF_01859"/>
    </source>
</evidence>
<feature type="chain" id="PRO_0000366508" description="Ribosomal RNA large subunit methyltransferase G">
    <location>
        <begin position="1"/>
        <end position="383"/>
    </location>
</feature>
<accession>Q12K11</accession>